<evidence type="ECO:0000255" key="1">
    <source>
        <dbReference type="HAMAP-Rule" id="MF_01382"/>
    </source>
</evidence>
<keyword id="KW-0067">ATP-binding</keyword>
<keyword id="KW-1003">Cell membrane</keyword>
<keyword id="KW-0963">Cytoplasm</keyword>
<keyword id="KW-0472">Membrane</keyword>
<keyword id="KW-0547">Nucleotide-binding</keyword>
<keyword id="KW-0653">Protein transport</keyword>
<keyword id="KW-1185">Reference proteome</keyword>
<keyword id="KW-1278">Translocase</keyword>
<keyword id="KW-0811">Translocation</keyword>
<keyword id="KW-0813">Transport</keyword>
<dbReference type="EC" id="7.4.2.8" evidence="1"/>
<dbReference type="EMBL" id="AE016879">
    <property type="protein sequence ID" value="AAP24880.1"/>
    <property type="molecule type" value="Genomic_DNA"/>
</dbReference>
<dbReference type="EMBL" id="AE017334">
    <property type="protein sequence ID" value="AAT29993.1"/>
    <property type="molecule type" value="Genomic_DNA"/>
</dbReference>
<dbReference type="EMBL" id="AE017225">
    <property type="protein sequence ID" value="AAT53165.1"/>
    <property type="molecule type" value="Genomic_DNA"/>
</dbReference>
<dbReference type="RefSeq" id="NP_843394.1">
    <property type="nucleotide sequence ID" value="NC_003997.3"/>
</dbReference>
<dbReference type="RefSeq" id="WP_000935179.1">
    <property type="nucleotide sequence ID" value="NZ_WXXJ01000017.1"/>
</dbReference>
<dbReference type="RefSeq" id="YP_027114.1">
    <property type="nucleotide sequence ID" value="NC_005945.1"/>
</dbReference>
<dbReference type="SMR" id="Q81UI7"/>
<dbReference type="IntAct" id="Q81UI7">
    <property type="interactions" value="14"/>
</dbReference>
<dbReference type="STRING" id="261594.GBAA_0882"/>
<dbReference type="DNASU" id="1088471"/>
<dbReference type="GeneID" id="45020946"/>
<dbReference type="KEGG" id="ban:BA_0882"/>
<dbReference type="KEGG" id="banh:HYU01_04745"/>
<dbReference type="KEGG" id="bar:GBAA_0882"/>
<dbReference type="KEGG" id="bat:BAS0838"/>
<dbReference type="PATRIC" id="fig|198094.11.peg.879"/>
<dbReference type="eggNOG" id="COG0653">
    <property type="taxonomic scope" value="Bacteria"/>
</dbReference>
<dbReference type="HOGENOM" id="CLU_005314_3_2_9"/>
<dbReference type="OMA" id="IGQIHEF"/>
<dbReference type="OrthoDB" id="9805579at2"/>
<dbReference type="Proteomes" id="UP000000427">
    <property type="component" value="Chromosome"/>
</dbReference>
<dbReference type="Proteomes" id="UP000000594">
    <property type="component" value="Chromosome"/>
</dbReference>
<dbReference type="GO" id="GO:0031522">
    <property type="term" value="C:cell envelope Sec protein transport complex"/>
    <property type="evidence" value="ECO:0007669"/>
    <property type="project" value="TreeGrafter"/>
</dbReference>
<dbReference type="GO" id="GO:0005829">
    <property type="term" value="C:cytosol"/>
    <property type="evidence" value="ECO:0007669"/>
    <property type="project" value="TreeGrafter"/>
</dbReference>
<dbReference type="GO" id="GO:0005886">
    <property type="term" value="C:plasma membrane"/>
    <property type="evidence" value="ECO:0007669"/>
    <property type="project" value="UniProtKB-SubCell"/>
</dbReference>
<dbReference type="GO" id="GO:0005524">
    <property type="term" value="F:ATP binding"/>
    <property type="evidence" value="ECO:0007669"/>
    <property type="project" value="UniProtKB-UniRule"/>
</dbReference>
<dbReference type="GO" id="GO:0008564">
    <property type="term" value="F:protein-exporting ATPase activity"/>
    <property type="evidence" value="ECO:0007669"/>
    <property type="project" value="UniProtKB-EC"/>
</dbReference>
<dbReference type="GO" id="GO:0065002">
    <property type="term" value="P:intracellular protein transmembrane transport"/>
    <property type="evidence" value="ECO:0007669"/>
    <property type="project" value="UniProtKB-UniRule"/>
</dbReference>
<dbReference type="GO" id="GO:0017038">
    <property type="term" value="P:protein import"/>
    <property type="evidence" value="ECO:0007669"/>
    <property type="project" value="InterPro"/>
</dbReference>
<dbReference type="GO" id="GO:0006605">
    <property type="term" value="P:protein targeting"/>
    <property type="evidence" value="ECO:0007669"/>
    <property type="project" value="UniProtKB-UniRule"/>
</dbReference>
<dbReference type="GO" id="GO:0043952">
    <property type="term" value="P:protein transport by the Sec complex"/>
    <property type="evidence" value="ECO:0007669"/>
    <property type="project" value="TreeGrafter"/>
</dbReference>
<dbReference type="CDD" id="cd17928">
    <property type="entry name" value="DEXDc_SecA"/>
    <property type="match status" value="1"/>
</dbReference>
<dbReference type="CDD" id="cd18803">
    <property type="entry name" value="SF2_C_secA"/>
    <property type="match status" value="1"/>
</dbReference>
<dbReference type="FunFam" id="3.40.50.300:FF:000429">
    <property type="entry name" value="Preprotein translocase subunit SecA"/>
    <property type="match status" value="1"/>
</dbReference>
<dbReference type="Gene3D" id="1.10.3060.10">
    <property type="entry name" value="Helical scaffold and wing domains of SecA"/>
    <property type="match status" value="1"/>
</dbReference>
<dbReference type="Gene3D" id="3.40.50.300">
    <property type="entry name" value="P-loop containing nucleotide triphosphate hydrolases"/>
    <property type="match status" value="3"/>
</dbReference>
<dbReference type="Gene3D" id="3.90.1440.10">
    <property type="entry name" value="SecA, preprotein cross-linking domain"/>
    <property type="match status" value="1"/>
</dbReference>
<dbReference type="HAMAP" id="MF_01382">
    <property type="entry name" value="SecA"/>
    <property type="match status" value="1"/>
</dbReference>
<dbReference type="InterPro" id="IPR014001">
    <property type="entry name" value="Helicase_ATP-bd"/>
</dbReference>
<dbReference type="InterPro" id="IPR001650">
    <property type="entry name" value="Helicase_C-like"/>
</dbReference>
<dbReference type="InterPro" id="IPR027417">
    <property type="entry name" value="P-loop_NTPase"/>
</dbReference>
<dbReference type="InterPro" id="IPR000185">
    <property type="entry name" value="SecA"/>
</dbReference>
<dbReference type="InterPro" id="IPR030908">
    <property type="entry name" value="SecA2_Bac_anthr"/>
</dbReference>
<dbReference type="InterPro" id="IPR020937">
    <property type="entry name" value="SecA_CS"/>
</dbReference>
<dbReference type="InterPro" id="IPR011115">
    <property type="entry name" value="SecA_DEAD"/>
</dbReference>
<dbReference type="InterPro" id="IPR014018">
    <property type="entry name" value="SecA_motor_DEAD"/>
</dbReference>
<dbReference type="InterPro" id="IPR011130">
    <property type="entry name" value="SecA_preprotein_X-link_dom"/>
</dbReference>
<dbReference type="InterPro" id="IPR044722">
    <property type="entry name" value="SecA_SF2_C"/>
</dbReference>
<dbReference type="InterPro" id="IPR011116">
    <property type="entry name" value="SecA_Wing/Scaffold"/>
</dbReference>
<dbReference type="InterPro" id="IPR036266">
    <property type="entry name" value="SecA_Wing/Scaffold_sf"/>
</dbReference>
<dbReference type="InterPro" id="IPR036670">
    <property type="entry name" value="SecA_X-link_sf"/>
</dbReference>
<dbReference type="NCBIfam" id="NF006630">
    <property type="entry name" value="PRK09200.1"/>
    <property type="match status" value="1"/>
</dbReference>
<dbReference type="NCBIfam" id="TIGR00963">
    <property type="entry name" value="secA"/>
    <property type="match status" value="1"/>
</dbReference>
<dbReference type="NCBIfam" id="TIGR04397">
    <property type="entry name" value="SecA2_Bac_anthr"/>
    <property type="match status" value="1"/>
</dbReference>
<dbReference type="PANTHER" id="PTHR30612:SF0">
    <property type="entry name" value="CHLOROPLAST PROTEIN-TRANSPORTING ATPASE"/>
    <property type="match status" value="1"/>
</dbReference>
<dbReference type="PANTHER" id="PTHR30612">
    <property type="entry name" value="SECA INNER MEMBRANE COMPONENT OF SEC PROTEIN SECRETION SYSTEM"/>
    <property type="match status" value="1"/>
</dbReference>
<dbReference type="Pfam" id="PF21090">
    <property type="entry name" value="P-loop_SecA"/>
    <property type="match status" value="2"/>
</dbReference>
<dbReference type="Pfam" id="PF07517">
    <property type="entry name" value="SecA_DEAD"/>
    <property type="match status" value="1"/>
</dbReference>
<dbReference type="Pfam" id="PF01043">
    <property type="entry name" value="SecA_PP_bind"/>
    <property type="match status" value="1"/>
</dbReference>
<dbReference type="Pfam" id="PF07516">
    <property type="entry name" value="SecA_SW"/>
    <property type="match status" value="1"/>
</dbReference>
<dbReference type="PRINTS" id="PR00906">
    <property type="entry name" value="SECA"/>
</dbReference>
<dbReference type="SMART" id="SM00957">
    <property type="entry name" value="SecA_DEAD"/>
    <property type="match status" value="1"/>
</dbReference>
<dbReference type="SMART" id="SM00958">
    <property type="entry name" value="SecA_PP_bind"/>
    <property type="match status" value="1"/>
</dbReference>
<dbReference type="SUPFAM" id="SSF81886">
    <property type="entry name" value="Helical scaffold and wing domains of SecA"/>
    <property type="match status" value="1"/>
</dbReference>
<dbReference type="SUPFAM" id="SSF52540">
    <property type="entry name" value="P-loop containing nucleoside triphosphate hydrolases"/>
    <property type="match status" value="2"/>
</dbReference>
<dbReference type="SUPFAM" id="SSF81767">
    <property type="entry name" value="Pre-protein crosslinking domain of SecA"/>
    <property type="match status" value="1"/>
</dbReference>
<dbReference type="PROSITE" id="PS01312">
    <property type="entry name" value="SECA"/>
    <property type="match status" value="1"/>
</dbReference>
<dbReference type="PROSITE" id="PS51196">
    <property type="entry name" value="SECA_MOTOR_DEAD"/>
    <property type="match status" value="1"/>
</dbReference>
<proteinExistence type="inferred from homology"/>
<name>SECA2_BACAN</name>
<feature type="chain" id="PRO_0000318311" description="Protein translocase subunit SecA 2">
    <location>
        <begin position="1"/>
        <end position="788"/>
    </location>
</feature>
<feature type="binding site" evidence="1">
    <location>
        <position position="86"/>
    </location>
    <ligand>
        <name>ATP</name>
        <dbReference type="ChEBI" id="CHEBI:30616"/>
    </ligand>
</feature>
<feature type="binding site" evidence="1">
    <location>
        <begin position="104"/>
        <end position="108"/>
    </location>
    <ligand>
        <name>ATP</name>
        <dbReference type="ChEBI" id="CHEBI:30616"/>
    </ligand>
</feature>
<feature type="binding site" evidence="1">
    <location>
        <position position="493"/>
    </location>
    <ligand>
        <name>ATP</name>
        <dbReference type="ChEBI" id="CHEBI:30616"/>
    </ligand>
</feature>
<protein>
    <recommendedName>
        <fullName evidence="1">Protein translocase subunit SecA 2</fullName>
        <ecNumber evidence="1">7.4.2.8</ecNumber>
    </recommendedName>
</protein>
<organism>
    <name type="scientific">Bacillus anthracis</name>
    <dbReference type="NCBI Taxonomy" id="1392"/>
    <lineage>
        <taxon>Bacteria</taxon>
        <taxon>Bacillati</taxon>
        <taxon>Bacillota</taxon>
        <taxon>Bacilli</taxon>
        <taxon>Bacillales</taxon>
        <taxon>Bacillaceae</taxon>
        <taxon>Bacillus</taxon>
        <taxon>Bacillus cereus group</taxon>
    </lineage>
</organism>
<accession>Q81UI7</accession>
<accession>Q6I2R6</accession>
<accession>Q6KWJ7</accession>
<gene>
    <name evidence="1" type="primary">secA2</name>
    <name type="ordered locus">BA_0882</name>
    <name type="ordered locus">GBAA_0882</name>
    <name type="ordered locus">BAS0838</name>
</gene>
<reference key="1">
    <citation type="journal article" date="2003" name="Nature">
        <title>The genome sequence of Bacillus anthracis Ames and comparison to closely related bacteria.</title>
        <authorList>
            <person name="Read T.D."/>
            <person name="Peterson S.N."/>
            <person name="Tourasse N.J."/>
            <person name="Baillie L.W."/>
            <person name="Paulsen I.T."/>
            <person name="Nelson K.E."/>
            <person name="Tettelin H."/>
            <person name="Fouts D.E."/>
            <person name="Eisen J.A."/>
            <person name="Gill S.R."/>
            <person name="Holtzapple E.K."/>
            <person name="Okstad O.A."/>
            <person name="Helgason E."/>
            <person name="Rilstone J."/>
            <person name="Wu M."/>
            <person name="Kolonay J.F."/>
            <person name="Beanan M.J."/>
            <person name="Dodson R.J."/>
            <person name="Brinkac L.M."/>
            <person name="Gwinn M.L."/>
            <person name="DeBoy R.T."/>
            <person name="Madpu R."/>
            <person name="Daugherty S.C."/>
            <person name="Durkin A.S."/>
            <person name="Haft D.H."/>
            <person name="Nelson W.C."/>
            <person name="Peterson J.D."/>
            <person name="Pop M."/>
            <person name="Khouri H.M."/>
            <person name="Radune D."/>
            <person name="Benton J.L."/>
            <person name="Mahamoud Y."/>
            <person name="Jiang L."/>
            <person name="Hance I.R."/>
            <person name="Weidman J.F."/>
            <person name="Berry K.J."/>
            <person name="Plaut R.D."/>
            <person name="Wolf A.M."/>
            <person name="Watkins K.L."/>
            <person name="Nierman W.C."/>
            <person name="Hazen A."/>
            <person name="Cline R.T."/>
            <person name="Redmond C."/>
            <person name="Thwaite J.E."/>
            <person name="White O."/>
            <person name="Salzberg S.L."/>
            <person name="Thomason B."/>
            <person name="Friedlander A.M."/>
            <person name="Koehler T.M."/>
            <person name="Hanna P.C."/>
            <person name="Kolstoe A.-B."/>
            <person name="Fraser C.M."/>
        </authorList>
    </citation>
    <scope>NUCLEOTIDE SEQUENCE [LARGE SCALE GENOMIC DNA]</scope>
    <source>
        <strain>Ames / isolate Porton</strain>
    </source>
</reference>
<reference key="2">
    <citation type="submission" date="2004-01" db="EMBL/GenBank/DDBJ databases">
        <title>Complete genome sequence of Bacillus anthracis Sterne.</title>
        <authorList>
            <person name="Brettin T.S."/>
            <person name="Bruce D."/>
            <person name="Challacombe J.F."/>
            <person name="Gilna P."/>
            <person name="Han C."/>
            <person name="Hill K."/>
            <person name="Hitchcock P."/>
            <person name="Jackson P."/>
            <person name="Keim P."/>
            <person name="Longmire J."/>
            <person name="Lucas S."/>
            <person name="Okinaka R."/>
            <person name="Richardson P."/>
            <person name="Rubin E."/>
            <person name="Tice H."/>
        </authorList>
    </citation>
    <scope>NUCLEOTIDE SEQUENCE [LARGE SCALE GENOMIC DNA]</scope>
    <source>
        <strain>Sterne</strain>
    </source>
</reference>
<reference key="3">
    <citation type="journal article" date="2009" name="J. Bacteriol.">
        <title>The complete genome sequence of Bacillus anthracis Ames 'Ancestor'.</title>
        <authorList>
            <person name="Ravel J."/>
            <person name="Jiang L."/>
            <person name="Stanley S.T."/>
            <person name="Wilson M.R."/>
            <person name="Decker R.S."/>
            <person name="Read T.D."/>
            <person name="Worsham P."/>
            <person name="Keim P.S."/>
            <person name="Salzberg S.L."/>
            <person name="Fraser-Liggett C.M."/>
            <person name="Rasko D.A."/>
        </authorList>
    </citation>
    <scope>NUCLEOTIDE SEQUENCE [LARGE SCALE GENOMIC DNA]</scope>
    <source>
        <strain>Ames ancestor</strain>
    </source>
</reference>
<comment type="function">
    <text evidence="1">Part of the Sec protein translocase complex. Interacts with the SecYEG preprotein conducting channel. Has a central role in coupling the hydrolysis of ATP to the transfer of proteins into and across the cell membrane, serving as an ATP-driven molecular motor driving the stepwise translocation of polypeptide chains across the membrane.</text>
</comment>
<comment type="catalytic activity">
    <reaction evidence="1">
        <text>ATP + H2O + cellular proteinSide 1 = ADP + phosphate + cellular proteinSide 2.</text>
        <dbReference type="EC" id="7.4.2.8"/>
    </reaction>
</comment>
<comment type="subunit">
    <text evidence="1">Monomer and homodimer. Part of the essential Sec protein translocation apparatus which comprises SecA, SecYEG and auxiliary proteins SecDF. Other proteins may also be involved.</text>
</comment>
<comment type="subcellular location">
    <subcellularLocation>
        <location evidence="1">Cell membrane</location>
        <topology evidence="1">Peripheral membrane protein</topology>
        <orientation evidence="1">Cytoplasmic side</orientation>
    </subcellularLocation>
    <subcellularLocation>
        <location evidence="1">Cytoplasm</location>
    </subcellularLocation>
    <text evidence="1">Distribution is 50-50.</text>
</comment>
<comment type="similarity">
    <text evidence="1">Belongs to the SecA family.</text>
</comment>
<sequence>MLNSVKKLLGDSQKRKLKKYEQLVQEINNLEEKLSDLSDEELRHKTITFKDMLRDGKTVDDIKVEAFAVVREAAKRVLGLRHYDVQLIGGLVLLEGNIAEMPTGEGKTLVSSLPTYVRALEGKGVHVITVNDYLAKRDKELIGQVHEFLGLKVGLNIPQIDPSEKKLAYEADITYGIGTEFGFDYLRDNMAASKNEQVQRPYHFAIIDEIDSVLIDEAKTPLIIAGKKSSSSDLHYLCAKVIKSFQDTLHYTYDAESKSASFTEDGITKIEDLFDIDNLYDLEHQTLYHYMIQALRAHVAFQCDVDYIVHDEKILLVDIFTGRVMDGRSLSDGLHQALEAKEGLEITEENQTQASITIQNFFRMYPALSGMTGTAKTEEKEFNRVYNMEVMPIPTNRPIIREDKKDVVYVTADAKYKAVREDVLKHNKQGRPILIGTMSILQSETVARYLDEANITYQLLNAKSAEQEADLIATAGQKGQITIATNMAGRGTDILLGEGVHELGGLHVIGTERHESRRVDNQLKGRAGRQGDPGSSQFFLSLEDEMLKRFAQEEVEKLTKSLKTDETGLILTSKVHDFVNRTQLICEGSHFSMREYNLKLDDVINDQRNVIYKLRNNLLQEDTNMIEIIIPMIDHAVEAISKQYLVEGMLPEEWDFASLTASLNEILSVENMPSLSANNVHSPEDLQSVLKETLSLYKERVNELDSNTDLQQSLRYVALHFLDQNWVNHLDAMTHLKEGIGLRQYQQEDPTRLYQKEALDIFLYTYGNFEKEMCRYVARHLGVPENVQ</sequence>